<name>Y646_MYCPN</name>
<dbReference type="EMBL" id="U00089">
    <property type="protein sequence ID" value="AAB95844.1"/>
    <property type="molecule type" value="Genomic_DNA"/>
</dbReference>
<dbReference type="PIR" id="S73522">
    <property type="entry name" value="S73522"/>
</dbReference>
<dbReference type="RefSeq" id="NP_110335.1">
    <property type="nucleotide sequence ID" value="NC_000912.1"/>
</dbReference>
<dbReference type="RefSeq" id="WP_010875003.1">
    <property type="nucleotide sequence ID" value="NZ_OU342337.1"/>
</dbReference>
<dbReference type="STRING" id="272634.MPN_646"/>
<dbReference type="EnsemblBacteria" id="AAB95844">
    <property type="protein sequence ID" value="AAB95844"/>
    <property type="gene ID" value="MPN_646"/>
</dbReference>
<dbReference type="KEGG" id="mpn:MPN_646"/>
<dbReference type="PATRIC" id="fig|272634.6.peg.709"/>
<dbReference type="HOGENOM" id="CLU_080699_0_0_14"/>
<dbReference type="OrthoDB" id="403108at2"/>
<dbReference type="BioCyc" id="MPNE272634:G1GJ3-1031-MONOMER"/>
<dbReference type="Proteomes" id="UP000000808">
    <property type="component" value="Chromosome"/>
</dbReference>
<dbReference type="GO" id="GO:0005886">
    <property type="term" value="C:plasma membrane"/>
    <property type="evidence" value="ECO:0007669"/>
    <property type="project" value="UniProtKB-SubCell"/>
</dbReference>
<dbReference type="InterPro" id="IPR001595">
    <property type="entry name" value="Lipoprotein_3"/>
</dbReference>
<dbReference type="Pfam" id="PF00938">
    <property type="entry name" value="Lipoprotein_3"/>
    <property type="match status" value="1"/>
</dbReference>
<dbReference type="PROSITE" id="PS51257">
    <property type="entry name" value="PROKAR_LIPOPROTEIN"/>
    <property type="match status" value="1"/>
</dbReference>
<sequence>MNKKSIWSKTAFGSLFLLLGTAFTACSNYDFQANLTSLNQLRTSANKDINLTQDKNTLIDALKTAFENNSEGTTKVLLDAWKFSLYDAKILEKQDPVKFVKAFGSGKSKEDIEPSAGVRGLRFVERFGDNTASLIKNAILLDQQKVEVFNIRFKSSRDFTIQIKLNAKGNYKKSEVEKYKSQIGVQDNELGDKEEGTLEADLIFTYTPPASNLFSKSNFDKLTKSINFNTNLKLEMVGKDEVMRKILNSSAFTNNLASVNYPNQAVNLLPYVLYSIL</sequence>
<accession>P75151</accession>
<gene>
    <name type="ordered locus">MPN_646</name>
    <name type="ORF">E09_orf277</name>
    <name type="ORF">MP196</name>
</gene>
<reference key="1">
    <citation type="journal article" date="1996" name="Nucleic Acids Res.">
        <title>Complete sequence analysis of the genome of the bacterium Mycoplasma pneumoniae.</title>
        <authorList>
            <person name="Himmelreich R."/>
            <person name="Hilbert H."/>
            <person name="Plagens H."/>
            <person name="Pirkl E."/>
            <person name="Li B.-C."/>
            <person name="Herrmann R."/>
        </authorList>
    </citation>
    <scope>NUCLEOTIDE SEQUENCE [LARGE SCALE GENOMIC DNA]</scope>
    <source>
        <strain>ATCC 29342 / M129 / Subtype 1</strain>
    </source>
</reference>
<comment type="subcellular location">
    <subcellularLocation>
        <location evidence="1">Cell membrane</location>
        <topology evidence="1">Lipid-anchor</topology>
    </subcellularLocation>
</comment>
<comment type="similarity">
    <text evidence="2">Belongs to the MG439/MG440 family.</text>
</comment>
<organism>
    <name type="scientific">Mycoplasma pneumoniae (strain ATCC 29342 / M129 / Subtype 1)</name>
    <name type="common">Mycoplasmoides pneumoniae</name>
    <dbReference type="NCBI Taxonomy" id="272634"/>
    <lineage>
        <taxon>Bacteria</taxon>
        <taxon>Bacillati</taxon>
        <taxon>Mycoplasmatota</taxon>
        <taxon>Mycoplasmoidales</taxon>
        <taxon>Mycoplasmoidaceae</taxon>
        <taxon>Mycoplasmoides</taxon>
    </lineage>
</organism>
<protein>
    <recommendedName>
        <fullName>Uncharacterized lipoprotein MG440 homolog 1</fullName>
    </recommendedName>
</protein>
<proteinExistence type="inferred from homology"/>
<keyword id="KW-1003">Cell membrane</keyword>
<keyword id="KW-0449">Lipoprotein</keyword>
<keyword id="KW-0472">Membrane</keyword>
<keyword id="KW-0564">Palmitate</keyword>
<keyword id="KW-1185">Reference proteome</keyword>
<keyword id="KW-0732">Signal</keyword>
<evidence type="ECO:0000255" key="1">
    <source>
        <dbReference type="PROSITE-ProRule" id="PRU00303"/>
    </source>
</evidence>
<evidence type="ECO:0000305" key="2"/>
<feature type="signal peptide" evidence="1">
    <location>
        <begin position="1"/>
        <end position="25"/>
    </location>
</feature>
<feature type="chain" id="PRO_0000014050" description="Uncharacterized lipoprotein MG440 homolog 1">
    <location>
        <begin position="26"/>
        <end position="277"/>
    </location>
</feature>
<feature type="lipid moiety-binding region" description="N-palmitoyl cysteine" evidence="1">
    <location>
        <position position="26"/>
    </location>
</feature>
<feature type="lipid moiety-binding region" description="S-diacylglycerol cysteine" evidence="1">
    <location>
        <position position="26"/>
    </location>
</feature>